<reference key="1">
    <citation type="submission" date="2007-02" db="EMBL/GenBank/DDBJ databases">
        <title>The NIAID influenza genome sequencing project.</title>
        <authorList>
            <person name="Ghedin E."/>
            <person name="Spiro D."/>
            <person name="Miller N."/>
            <person name="Zaborsky J."/>
            <person name="Feldblyum T."/>
            <person name="Subbu V."/>
            <person name="Shumway M."/>
            <person name="Sparenborg J."/>
            <person name="Groveman L."/>
            <person name="Halpin R."/>
            <person name="Sitz J."/>
            <person name="Koo H."/>
            <person name="Salzberg S.L."/>
            <person name="Webster R.G."/>
            <person name="Hoffmann E."/>
            <person name="Krauss S."/>
            <person name="Naeve C."/>
            <person name="Bao Y."/>
            <person name="Bolotov P."/>
            <person name="Dernovoy D."/>
            <person name="Kiryutin B."/>
            <person name="Lipman D.J."/>
            <person name="Tatusova T."/>
        </authorList>
    </citation>
    <scope>NUCLEOTIDE SEQUENCE [GENOMIC RNA]</scope>
</reference>
<reference key="2">
    <citation type="submission" date="2007-02" db="EMBL/GenBank/DDBJ databases">
        <authorList>
            <consortium name="The NIAID Influenza Genome Sequencing Consortium"/>
        </authorList>
    </citation>
    <scope>NUCLEOTIDE SEQUENCE [GENOMIC RNA]</scope>
</reference>
<name>PA_I96A2</name>
<gene>
    <name evidence="2" type="primary">PA</name>
</gene>
<dbReference type="EC" id="3.1.-.-" evidence="2"/>
<dbReference type="EMBL" id="CY019800">
    <property type="protein sequence ID" value="ABN50969.1"/>
    <property type="molecule type" value="Viral_cRNA"/>
</dbReference>
<dbReference type="SMR" id="A3DRP7"/>
<dbReference type="MEROPS" id="S62.001"/>
<dbReference type="Proteomes" id="UP000007557">
    <property type="component" value="Genome"/>
</dbReference>
<dbReference type="GO" id="GO:0030430">
    <property type="term" value="C:host cell cytoplasm"/>
    <property type="evidence" value="ECO:0007669"/>
    <property type="project" value="UniProtKB-SubCell"/>
</dbReference>
<dbReference type="GO" id="GO:0042025">
    <property type="term" value="C:host cell nucleus"/>
    <property type="evidence" value="ECO:0007669"/>
    <property type="project" value="UniProtKB-SubCell"/>
</dbReference>
<dbReference type="GO" id="GO:0004519">
    <property type="term" value="F:endonuclease activity"/>
    <property type="evidence" value="ECO:0007669"/>
    <property type="project" value="UniProtKB-KW"/>
</dbReference>
<dbReference type="GO" id="GO:0046872">
    <property type="term" value="F:metal ion binding"/>
    <property type="evidence" value="ECO:0007669"/>
    <property type="project" value="UniProtKB-KW"/>
</dbReference>
<dbReference type="GO" id="GO:0003723">
    <property type="term" value="F:RNA binding"/>
    <property type="evidence" value="ECO:0007669"/>
    <property type="project" value="UniProtKB-UniRule"/>
</dbReference>
<dbReference type="GO" id="GO:0075526">
    <property type="term" value="P:cap snatching"/>
    <property type="evidence" value="ECO:0007669"/>
    <property type="project" value="UniProtKB-UniRule"/>
</dbReference>
<dbReference type="GO" id="GO:0006351">
    <property type="term" value="P:DNA-templated transcription"/>
    <property type="evidence" value="ECO:0007669"/>
    <property type="project" value="UniProtKB-UniRule"/>
</dbReference>
<dbReference type="GO" id="GO:0039595">
    <property type="term" value="P:symbiont-mediated degradation of host mRNA"/>
    <property type="evidence" value="ECO:0000269"/>
    <property type="project" value="SigSci"/>
</dbReference>
<dbReference type="GO" id="GO:0039657">
    <property type="term" value="P:symbiont-mediated suppression of host gene expression"/>
    <property type="evidence" value="ECO:0007669"/>
    <property type="project" value="UniProtKB-KW"/>
</dbReference>
<dbReference type="GO" id="GO:0039523">
    <property type="term" value="P:symbiont-mediated suppression of host mRNA transcription via inhibition of RNA polymerase II activity"/>
    <property type="evidence" value="ECO:0007669"/>
    <property type="project" value="UniProtKB-UniRule"/>
</dbReference>
<dbReference type="GO" id="GO:0039694">
    <property type="term" value="P:viral RNA genome replication"/>
    <property type="evidence" value="ECO:0007669"/>
    <property type="project" value="InterPro"/>
</dbReference>
<dbReference type="GO" id="GO:0075523">
    <property type="term" value="P:viral translational frameshifting"/>
    <property type="evidence" value="ECO:0007669"/>
    <property type="project" value="UniProtKB-KW"/>
</dbReference>
<dbReference type="FunFam" id="3.40.91.90:FF:000001">
    <property type="entry name" value="Polymerase acidic protein"/>
    <property type="match status" value="1"/>
</dbReference>
<dbReference type="Gene3D" id="3.40.91.90">
    <property type="entry name" value="Influenza RNA-dependent RNA polymerase subunit PA, endonuclease domain"/>
    <property type="match status" value="1"/>
</dbReference>
<dbReference type="HAMAP" id="MF_04063">
    <property type="entry name" value="INFV_PA"/>
    <property type="match status" value="1"/>
</dbReference>
<dbReference type="InterPro" id="IPR037534">
    <property type="entry name" value="INFV_PA"/>
</dbReference>
<dbReference type="InterPro" id="IPR001009">
    <property type="entry name" value="PA/PA-X"/>
</dbReference>
<dbReference type="InterPro" id="IPR038372">
    <property type="entry name" value="PA/PA-X_sf"/>
</dbReference>
<dbReference type="Pfam" id="PF00603">
    <property type="entry name" value="Flu_PA"/>
    <property type="match status" value="1"/>
</dbReference>
<accession>A3DRP7</accession>
<keyword id="KW-1157">Cap snatching</keyword>
<keyword id="KW-0255">Endonuclease</keyword>
<keyword id="KW-1262">Eukaryotic host gene expression shutoff by virus</keyword>
<keyword id="KW-1191">Eukaryotic host transcription shutoff by virus</keyword>
<keyword id="KW-1035">Host cytoplasm</keyword>
<keyword id="KW-1190">Host gene expression shutoff by virus</keyword>
<keyword id="KW-1048">Host nucleus</keyword>
<keyword id="KW-0945">Host-virus interaction</keyword>
<keyword id="KW-0378">Hydrolase</keyword>
<keyword id="KW-1104">Inhibition of host RNA polymerase II by virus</keyword>
<keyword id="KW-0464">Manganese</keyword>
<keyword id="KW-0479">Metal-binding</keyword>
<keyword id="KW-0540">Nuclease</keyword>
<keyword id="KW-0597">Phosphoprotein</keyword>
<keyword id="KW-0688">Ribosomal frameshifting</keyword>
<proteinExistence type="inferred from homology"/>
<protein>
    <recommendedName>
        <fullName evidence="2">Polymerase acidic protein</fullName>
        <ecNumber evidence="2">3.1.-.-</ecNumber>
    </recommendedName>
    <alternativeName>
        <fullName evidence="2">RNA-directed RNA polymerase subunit P2</fullName>
    </alternativeName>
</protein>
<comment type="function">
    <text evidence="2">Plays an essential role in viral RNA transcription and replication by forming the heterotrimeric polymerase complex together with PB1 and PB2 subunits. The complex transcribes viral mRNAs by using a unique mechanism called cap-snatching. It consists in the hijacking and cleavage of host capped pre-mRNAs. These short capped RNAs are then used as primers for viral mRNAs. The PB2 subunit is responsible for the binding of the 5' cap of cellular pre-mRNAs which are subsequently cleaved after 10-13 nucleotides by the PA subunit that carries the endonuclease activity.</text>
</comment>
<comment type="cofactor">
    <cofactor evidence="2">
        <name>Mn(2+)</name>
        <dbReference type="ChEBI" id="CHEBI:29035"/>
    </cofactor>
    <text evidence="2">Binds 2 manganese ions per subunit.</text>
</comment>
<comment type="subunit">
    <text evidence="1 2">Influenza RNA polymerase is composed of three subunits: PB1, PB2 and PA. Interacts (via C-terminus) with PB1 (via N-terminus).</text>
</comment>
<comment type="subcellular location">
    <subcellularLocation>
        <location evidence="2">Host cytoplasm</location>
    </subcellularLocation>
    <subcellularLocation>
        <location evidence="2">Host nucleus</location>
    </subcellularLocation>
    <text evidence="1 2">PB1 and PA are transported in the host nucleus as a complex.</text>
</comment>
<comment type="alternative products">
    <event type="ribosomal frameshifting"/>
    <isoform>
        <id>A3DRP7-1</id>
        <name>PA</name>
        <sequence type="displayed"/>
    </isoform>
    <isoform>
        <id>P0DJW4-1</id>
        <name>PA-X</name>
        <sequence type="external"/>
    </isoform>
</comment>
<comment type="PTM">
    <text evidence="1 2">Phosphorylated on serines and threonines by host kinases, including human casein kinase II.</text>
</comment>
<comment type="similarity">
    <text evidence="2">Belongs to the influenza viruses PA family.</text>
</comment>
<organism>
    <name type="scientific">Influenza A virus (strain A/USA:Memphis/10/1996 H1N1)</name>
    <dbReference type="NCBI Taxonomy" id="416730"/>
    <lineage>
        <taxon>Viruses</taxon>
        <taxon>Riboviria</taxon>
        <taxon>Orthornavirae</taxon>
        <taxon>Negarnaviricota</taxon>
        <taxon>Polyploviricotina</taxon>
        <taxon>Insthoviricetes</taxon>
        <taxon>Articulavirales</taxon>
        <taxon>Orthomyxoviridae</taxon>
        <taxon>Alphainfluenzavirus</taxon>
        <taxon>Alphainfluenzavirus influenzae</taxon>
        <taxon>Influenza A virus</taxon>
    </lineage>
</organism>
<organismHost>
    <name type="scientific">Aves</name>
    <dbReference type="NCBI Taxonomy" id="8782"/>
</organismHost>
<organismHost>
    <name type="scientific">Homo sapiens</name>
    <name type="common">Human</name>
    <dbReference type="NCBI Taxonomy" id="9606"/>
</organismHost>
<organismHost>
    <name type="scientific">Sus scrofa</name>
    <name type="common">Pig</name>
    <dbReference type="NCBI Taxonomy" id="9823"/>
</organismHost>
<evidence type="ECO:0000250" key="1">
    <source>
        <dbReference type="UniProtKB" id="P03433"/>
    </source>
</evidence>
<evidence type="ECO:0000255" key="2">
    <source>
        <dbReference type="HAMAP-Rule" id="MF_04063"/>
    </source>
</evidence>
<sequence length="716" mass="82801">MEDFVRQCFNPMIVELAEKAMKEYGEDLKIETNKFAAICTHLEVCFMYSDFHFINEQGESIIVEPEDPNALLKHRFEIIEGRDRTMAWTVVNSICNTTGAEKPKFLPDLYDYKENRFIEIGVTRREVHIYYLEKANKIKSEKTHIHIFSFTGEEMATKADYTLDEESRARIKTRLFTIRQEMASRGLWDSFRQSERGEETIEERFEITGTMRRLADQSLPPNFSCLENFRAYVDGFEPNGYIEGKLSQMSKEVNARIEPFLKTTPRPIRLPDGPPCFQRSKFLLMDSLKLSIEDPSHEGEGIPLYDAIKCMRTFFGWKEPSVVKPHGKGINPNYLLSWKQVLAELQDIESEEKIPRTKNMKKTSQLKWALGENMAPEKVDFDDCKDIIDLKQYDSDEPELRSLSSWIQNEFNKACELTDSIWIELDEIGEDVAPIEHIASMRRNYFTAEVSHCRATEYIMKGVYINTALLNASCAAMDDFQLIPMISKCRTKEGRRKTNLYGFIIKGRSHLRNDTDVVNFVSMEFSLTDPRLEPHKWEKYCVLEIGDMLLRSAIGQVSRPMFLYVRTNGTSKIKMKWGMEMRRCLLQSLQQIESMIEAESSVKEKDMTKEFFENRSETWPIGESPKGVEEGSIGKVCRTLLAKSVFNSLYASPQLEGFSAESRKLLLIVQALRDNLEPGTFDLGGLYEAIEECLINDPWVLLNASWFNSFLTHALR</sequence>
<feature type="chain" id="PRO_0000373008" description="Polymerase acidic protein">
    <location>
        <begin position="1"/>
        <end position="716"/>
    </location>
</feature>
<feature type="short sequence motif" description="Nuclear localization signal 1 (NLS1)" evidence="1 2">
    <location>
        <begin position="124"/>
        <end position="139"/>
    </location>
</feature>
<feature type="short sequence motif" description="Nuclear localization signal 2 (NLS2)" evidence="1 2">
    <location>
        <begin position="184"/>
        <end position="247"/>
    </location>
</feature>
<feature type="binding site" evidence="2">
    <location>
        <position position="41"/>
    </location>
    <ligand>
        <name>Mn(2+)</name>
        <dbReference type="ChEBI" id="CHEBI:29035"/>
        <label>1</label>
    </ligand>
</feature>
<feature type="binding site" evidence="2">
    <location>
        <position position="80"/>
    </location>
    <ligand>
        <name>Mn(2+)</name>
        <dbReference type="ChEBI" id="CHEBI:29035"/>
        <label>2</label>
    </ligand>
</feature>
<feature type="binding site" evidence="2">
    <location>
        <position position="108"/>
    </location>
    <ligand>
        <name>Mn(2+)</name>
        <dbReference type="ChEBI" id="CHEBI:29035"/>
        <label>1</label>
    </ligand>
</feature>
<feature type="binding site" evidence="2">
    <location>
        <position position="108"/>
    </location>
    <ligand>
        <name>Mn(2+)</name>
        <dbReference type="ChEBI" id="CHEBI:29035"/>
        <label>2</label>
    </ligand>
</feature>
<feature type="binding site" evidence="2">
    <location>
        <position position="119"/>
    </location>
    <ligand>
        <name>Mn(2+)</name>
        <dbReference type="ChEBI" id="CHEBI:29035"/>
        <label>1</label>
    </ligand>
</feature>
<feature type="binding site" evidence="2">
    <location>
        <position position="120"/>
    </location>
    <ligand>
        <name>Mn(2+)</name>
        <dbReference type="ChEBI" id="CHEBI:29035"/>
        <label>1</label>
    </ligand>
</feature>